<dbReference type="EMBL" id="CP000029">
    <property type="protein sequence ID" value="AAW53867.1"/>
    <property type="molecule type" value="Genomic_DNA"/>
</dbReference>
<dbReference type="SMR" id="Q5HQP8"/>
<dbReference type="STRING" id="176279.SERP0500"/>
<dbReference type="KEGG" id="ser:SERP0500"/>
<dbReference type="eggNOG" id="COG0719">
    <property type="taxonomic scope" value="Bacteria"/>
</dbReference>
<dbReference type="HOGENOM" id="CLU_026231_0_1_9"/>
<dbReference type="Proteomes" id="UP000000531">
    <property type="component" value="Chromosome"/>
</dbReference>
<dbReference type="GO" id="GO:0016226">
    <property type="term" value="P:iron-sulfur cluster assembly"/>
    <property type="evidence" value="ECO:0007669"/>
    <property type="project" value="InterPro"/>
</dbReference>
<dbReference type="InterPro" id="IPR055346">
    <property type="entry name" value="Fe-S_cluster_assembly_SufBD"/>
</dbReference>
<dbReference type="InterPro" id="IPR010231">
    <property type="entry name" value="SUF_FeS_clus_asmbl_SufB"/>
</dbReference>
<dbReference type="InterPro" id="IPR000825">
    <property type="entry name" value="SUF_FeS_clus_asmbl_SufBD_core"/>
</dbReference>
<dbReference type="InterPro" id="IPR037284">
    <property type="entry name" value="SUF_FeS_clus_asmbl_SufBD_sf"/>
</dbReference>
<dbReference type="InterPro" id="IPR045595">
    <property type="entry name" value="SufBD_N"/>
</dbReference>
<dbReference type="NCBIfam" id="TIGR01980">
    <property type="entry name" value="sufB"/>
    <property type="match status" value="1"/>
</dbReference>
<dbReference type="PANTHER" id="PTHR30508">
    <property type="entry name" value="FES CLUSTER ASSEMBLY PROTEIN SUF"/>
    <property type="match status" value="1"/>
</dbReference>
<dbReference type="PANTHER" id="PTHR30508:SF1">
    <property type="entry name" value="UPF0051 PROTEIN ABCI8, CHLOROPLASTIC-RELATED"/>
    <property type="match status" value="1"/>
</dbReference>
<dbReference type="Pfam" id="PF01458">
    <property type="entry name" value="SUFBD_core"/>
    <property type="match status" value="1"/>
</dbReference>
<dbReference type="Pfam" id="PF19295">
    <property type="entry name" value="SufBD_N"/>
    <property type="match status" value="1"/>
</dbReference>
<dbReference type="SUPFAM" id="SSF101960">
    <property type="entry name" value="Stabilizer of iron transporter SufD"/>
    <property type="match status" value="1"/>
</dbReference>
<sequence length="465" mass="52508">MAKQAPDVGDYKYGFHDEDVSIFRSERGLTENIVTEISKMKEEPQWMLDFRLKALKLFYKMPMPQWGGDLSELDFDDITYYVKPSEHTERSWDEVPEEIKRTFDKLGIPEAEQKYLAGVSAQYESEVVYHNMEKELEEKGIIFKDTDSALRENEELFREYFASVVPAADNKFAALNSAVWSGGSFIYVPKNVKLDTPLQAYFRINSENMGQFERTLIIADEGASVNYVEGCTAPVYSTSSLHSAVVEIIVHKDAHVRYTTIQNWANNVYNLVTKRTFVHENGNMEWVDGNLGSKLTMKYPNCVLLGEGAKGSTLSIAFAGKGQVQDAGAKMIHKAPNTSSTIVSKSISKNGGKVIYRGIVHFGRKAKGARSNIECDTLILDNESTSDTIPYNEVFNDNISLEHEAKVSKVSEEQLFYLMSRGISEEEATEMIVMGFIEPFTKELPMEYAVEMNRLIKFEMEGSIG</sequence>
<comment type="similarity">
    <text evidence="1">Belongs to the iron-sulfur cluster assembly SufBD family.</text>
</comment>
<name>Y500_STAEQ</name>
<accession>Q5HQP8</accession>
<evidence type="ECO:0000305" key="1"/>
<feature type="chain" id="PRO_0000298960" description="Iron-sulfur cluster assembly SufBD family protein SERP0500">
    <location>
        <begin position="1"/>
        <end position="465"/>
    </location>
</feature>
<reference key="1">
    <citation type="journal article" date="2005" name="J. Bacteriol.">
        <title>Insights on evolution of virulence and resistance from the complete genome analysis of an early methicillin-resistant Staphylococcus aureus strain and a biofilm-producing methicillin-resistant Staphylococcus epidermidis strain.</title>
        <authorList>
            <person name="Gill S.R."/>
            <person name="Fouts D.E."/>
            <person name="Archer G.L."/>
            <person name="Mongodin E.F."/>
            <person name="DeBoy R.T."/>
            <person name="Ravel J."/>
            <person name="Paulsen I.T."/>
            <person name="Kolonay J.F."/>
            <person name="Brinkac L.M."/>
            <person name="Beanan M.J."/>
            <person name="Dodson R.J."/>
            <person name="Daugherty S.C."/>
            <person name="Madupu R."/>
            <person name="Angiuoli S.V."/>
            <person name="Durkin A.S."/>
            <person name="Haft D.H."/>
            <person name="Vamathevan J.J."/>
            <person name="Khouri H."/>
            <person name="Utterback T.R."/>
            <person name="Lee C."/>
            <person name="Dimitrov G."/>
            <person name="Jiang L."/>
            <person name="Qin H."/>
            <person name="Weidman J."/>
            <person name="Tran K."/>
            <person name="Kang K.H."/>
            <person name="Hance I.R."/>
            <person name="Nelson K.E."/>
            <person name="Fraser C.M."/>
        </authorList>
    </citation>
    <scope>NUCLEOTIDE SEQUENCE [LARGE SCALE GENOMIC DNA]</scope>
    <source>
        <strain>ATCC 35984 / DSM 28319 / BCRC 17069 / CCUG 31568 / BM 3577 / RP62A</strain>
    </source>
</reference>
<organism>
    <name type="scientific">Staphylococcus epidermidis (strain ATCC 35984 / DSM 28319 / BCRC 17069 / CCUG 31568 / BM 3577 / RP62A)</name>
    <dbReference type="NCBI Taxonomy" id="176279"/>
    <lineage>
        <taxon>Bacteria</taxon>
        <taxon>Bacillati</taxon>
        <taxon>Bacillota</taxon>
        <taxon>Bacilli</taxon>
        <taxon>Bacillales</taxon>
        <taxon>Staphylococcaceae</taxon>
        <taxon>Staphylococcus</taxon>
    </lineage>
</organism>
<keyword id="KW-1185">Reference proteome</keyword>
<proteinExistence type="inferred from homology"/>
<protein>
    <recommendedName>
        <fullName>Iron-sulfur cluster assembly SufBD family protein SERP0500</fullName>
    </recommendedName>
</protein>
<gene>
    <name type="ordered locus">SERP0500</name>
</gene>